<organism>
    <name type="scientific">Arabidopsis thaliana</name>
    <name type="common">Mouse-ear cress</name>
    <dbReference type="NCBI Taxonomy" id="3702"/>
    <lineage>
        <taxon>Eukaryota</taxon>
        <taxon>Viridiplantae</taxon>
        <taxon>Streptophyta</taxon>
        <taxon>Embryophyta</taxon>
        <taxon>Tracheophyta</taxon>
        <taxon>Spermatophyta</taxon>
        <taxon>Magnoliopsida</taxon>
        <taxon>eudicotyledons</taxon>
        <taxon>Gunneridae</taxon>
        <taxon>Pentapetalae</taxon>
        <taxon>rosids</taxon>
        <taxon>malvids</taxon>
        <taxon>Brassicales</taxon>
        <taxon>Brassicaceae</taxon>
        <taxon>Camelineae</taxon>
        <taxon>Arabidopsis</taxon>
    </lineage>
</organism>
<reference key="1">
    <citation type="journal article" date="2000" name="Nature">
        <title>Sequence and analysis of chromosome 1 of the plant Arabidopsis thaliana.</title>
        <authorList>
            <person name="Theologis A."/>
            <person name="Ecker J.R."/>
            <person name="Palm C.J."/>
            <person name="Federspiel N.A."/>
            <person name="Kaul S."/>
            <person name="White O."/>
            <person name="Alonso J."/>
            <person name="Altafi H."/>
            <person name="Araujo R."/>
            <person name="Bowman C.L."/>
            <person name="Brooks S.Y."/>
            <person name="Buehler E."/>
            <person name="Chan A."/>
            <person name="Chao Q."/>
            <person name="Chen H."/>
            <person name="Cheuk R.F."/>
            <person name="Chin C.W."/>
            <person name="Chung M.K."/>
            <person name="Conn L."/>
            <person name="Conway A.B."/>
            <person name="Conway A.R."/>
            <person name="Creasy T.H."/>
            <person name="Dewar K."/>
            <person name="Dunn P."/>
            <person name="Etgu P."/>
            <person name="Feldblyum T.V."/>
            <person name="Feng J.-D."/>
            <person name="Fong B."/>
            <person name="Fujii C.Y."/>
            <person name="Gill J.E."/>
            <person name="Goldsmith A.D."/>
            <person name="Haas B."/>
            <person name="Hansen N.F."/>
            <person name="Hughes B."/>
            <person name="Huizar L."/>
            <person name="Hunter J.L."/>
            <person name="Jenkins J."/>
            <person name="Johnson-Hopson C."/>
            <person name="Khan S."/>
            <person name="Khaykin E."/>
            <person name="Kim C.J."/>
            <person name="Koo H.L."/>
            <person name="Kremenetskaia I."/>
            <person name="Kurtz D.B."/>
            <person name="Kwan A."/>
            <person name="Lam B."/>
            <person name="Langin-Hooper S."/>
            <person name="Lee A."/>
            <person name="Lee J.M."/>
            <person name="Lenz C.A."/>
            <person name="Li J.H."/>
            <person name="Li Y.-P."/>
            <person name="Lin X."/>
            <person name="Liu S.X."/>
            <person name="Liu Z.A."/>
            <person name="Luros J.S."/>
            <person name="Maiti R."/>
            <person name="Marziali A."/>
            <person name="Militscher J."/>
            <person name="Miranda M."/>
            <person name="Nguyen M."/>
            <person name="Nierman W.C."/>
            <person name="Osborne B.I."/>
            <person name="Pai G."/>
            <person name="Peterson J."/>
            <person name="Pham P.K."/>
            <person name="Rizzo M."/>
            <person name="Rooney T."/>
            <person name="Rowley D."/>
            <person name="Sakano H."/>
            <person name="Salzberg S.L."/>
            <person name="Schwartz J.R."/>
            <person name="Shinn P."/>
            <person name="Southwick A.M."/>
            <person name="Sun H."/>
            <person name="Tallon L.J."/>
            <person name="Tambunga G."/>
            <person name="Toriumi M.J."/>
            <person name="Town C.D."/>
            <person name="Utterback T."/>
            <person name="Van Aken S."/>
            <person name="Vaysberg M."/>
            <person name="Vysotskaia V.S."/>
            <person name="Walker M."/>
            <person name="Wu D."/>
            <person name="Yu G."/>
            <person name="Fraser C.M."/>
            <person name="Venter J.C."/>
            <person name="Davis R.W."/>
        </authorList>
    </citation>
    <scope>NUCLEOTIDE SEQUENCE [LARGE SCALE GENOMIC DNA]</scope>
    <source>
        <strain>cv. Columbia</strain>
    </source>
</reference>
<reference key="2">
    <citation type="journal article" date="2017" name="Plant J.">
        <title>Araport11: a complete reannotation of the Arabidopsis thaliana reference genome.</title>
        <authorList>
            <person name="Cheng C.Y."/>
            <person name="Krishnakumar V."/>
            <person name="Chan A.P."/>
            <person name="Thibaud-Nissen F."/>
            <person name="Schobel S."/>
            <person name="Town C.D."/>
        </authorList>
    </citation>
    <scope>GENOME REANNOTATION</scope>
    <source>
        <strain>cv. Columbia</strain>
    </source>
</reference>
<reference key="3">
    <citation type="journal article" date="2004" name="Plant Cell">
        <title>Genome-wide analysis of Arabidopsis pentatricopeptide repeat proteins reveals their essential role in organelle biogenesis.</title>
        <authorList>
            <person name="Lurin C."/>
            <person name="Andres C."/>
            <person name="Aubourg S."/>
            <person name="Bellaoui M."/>
            <person name="Bitton F."/>
            <person name="Bruyere C."/>
            <person name="Caboche M."/>
            <person name="Debast C."/>
            <person name="Gualberto J."/>
            <person name="Hoffmann B."/>
            <person name="Lecharny A."/>
            <person name="Le Ret M."/>
            <person name="Martin-Magniette M.-L."/>
            <person name="Mireau H."/>
            <person name="Peeters N."/>
            <person name="Renou J.-P."/>
            <person name="Szurek B."/>
            <person name="Taconnat L."/>
            <person name="Small I."/>
        </authorList>
    </citation>
    <scope>GENE FAMILY</scope>
</reference>
<accession>Q3EDF8</accession>
<feature type="chain" id="PRO_0000342769" description="Pentatricopeptide repeat-containing protein At1g09900">
    <location>
        <begin position="1"/>
        <end position="598"/>
    </location>
</feature>
<feature type="repeat" description="PPR 1">
    <location>
        <begin position="101"/>
        <end position="135"/>
    </location>
</feature>
<feature type="repeat" description="PPR 2">
    <location>
        <begin position="136"/>
        <end position="170"/>
    </location>
</feature>
<feature type="repeat" description="PPR 3">
    <location>
        <begin position="171"/>
        <end position="201"/>
    </location>
</feature>
<feature type="repeat" description="PPR 4">
    <location>
        <begin position="203"/>
        <end position="237"/>
    </location>
</feature>
<feature type="repeat" description="PPR 5">
    <location>
        <begin position="238"/>
        <end position="272"/>
    </location>
</feature>
<feature type="repeat" description="PPR 6">
    <location>
        <begin position="273"/>
        <end position="307"/>
    </location>
</feature>
<feature type="repeat" description="PPR 7">
    <location>
        <begin position="308"/>
        <end position="342"/>
    </location>
</feature>
<feature type="repeat" description="PPR 8">
    <location>
        <begin position="343"/>
        <end position="377"/>
    </location>
</feature>
<feature type="repeat" description="PPR 9">
    <location>
        <begin position="378"/>
        <end position="412"/>
    </location>
</feature>
<feature type="repeat" description="PPR 10">
    <location>
        <begin position="413"/>
        <end position="447"/>
    </location>
</feature>
<feature type="repeat" description="PPR 11">
    <location>
        <begin position="448"/>
        <end position="482"/>
    </location>
</feature>
<feature type="repeat" description="PPR 12">
    <location>
        <begin position="483"/>
        <end position="517"/>
    </location>
</feature>
<feature type="repeat" description="PPR 13">
    <location>
        <begin position="518"/>
        <end position="552"/>
    </location>
</feature>
<feature type="repeat" description="PPR 14">
    <location>
        <begin position="553"/>
        <end position="587"/>
    </location>
</feature>
<protein>
    <recommendedName>
        <fullName>Pentatricopeptide repeat-containing protein At1g09900</fullName>
    </recommendedName>
</protein>
<proteinExistence type="evidence at transcript level"/>
<comment type="similarity">
    <text evidence="1">Belongs to the PPR family. P subfamily.</text>
</comment>
<comment type="online information" name="Pentatricopeptide repeat proteins">
    <link uri="https://ppr.plantenergy.uwa.edu.au"/>
</comment>
<sequence length="598" mass="66256">MDLMVSTSSAQEGFCLIQQFHREYKRGNKLDVSCRTSGSISSKIPLGSRKRNRLVLVSAASKVESSGLNGRAQKFETLSSGYSNSNGNGHYSSVNSSFALEDVESNNHLRQMVRTGELEEGFKFLENMVYHGNVPDIIPCTTLIRGFCRLGKTRKAAKILEILEGSGAVPDVITYNVMISGYCKAGEINNALSVLDRMSVSPDVVTYNTILRSLCDSGKLKQAMEVLDRMLQRDCYPDVITYTILIEATCRDSGVGHAMKLLDEMRDRGCTPDVVTYNVLVNGICKEGRLDEAIKFLNDMPSSGCQPNVITHNIILRSMCSTGRWMDAEKLLADMLRKGFSPSVVTFNILINFLCRKGLLGRAIDILEKMPQHGCQPNSLSYNPLLHGFCKEKKMDRAIEYLERMVSRGCYPDIVTYNTMLTALCKDGKVEDAVEILNQLSSKGCSPVLITYNTVIDGLAKAGKTGKAIKLLDEMRAKDLKPDTITYSSLVGGLSREGKVDEAIKFFHEFERMGIRPNAVTFNSIMLGLCKSRQTDRAIDFLVFMINRGCKPNETSYTILIEGLAYEGMAKEALELLNELCNKGLMKKSSAEQVAGKM</sequence>
<gene>
    <name type="ordered locus">At1g09900</name>
    <name type="ORF">F21M12.38</name>
</gene>
<name>PPR28_ARATH</name>
<dbReference type="EMBL" id="AC000132">
    <property type="status" value="NOT_ANNOTATED_CDS"/>
    <property type="molecule type" value="Genomic_DNA"/>
</dbReference>
<dbReference type="EMBL" id="CP002684">
    <property type="protein sequence ID" value="AEE28512.1"/>
    <property type="molecule type" value="Genomic_DNA"/>
</dbReference>
<dbReference type="RefSeq" id="NP_172461.1">
    <property type="nucleotide sequence ID" value="NM_100864.1"/>
</dbReference>
<dbReference type="SMR" id="Q3EDF8"/>
<dbReference type="FunCoup" id="Q3EDF8">
    <property type="interactions" value="221"/>
</dbReference>
<dbReference type="STRING" id="3702.Q3EDF8"/>
<dbReference type="iPTMnet" id="Q3EDF8"/>
<dbReference type="PaxDb" id="3702-AT1G09900.1"/>
<dbReference type="ProteomicsDB" id="226214"/>
<dbReference type="EnsemblPlants" id="AT1G09900.1">
    <property type="protein sequence ID" value="AT1G09900.1"/>
    <property type="gene ID" value="AT1G09900"/>
</dbReference>
<dbReference type="GeneID" id="837522"/>
<dbReference type="Gramene" id="AT1G09900.1">
    <property type="protein sequence ID" value="AT1G09900.1"/>
    <property type="gene ID" value="AT1G09900"/>
</dbReference>
<dbReference type="KEGG" id="ath:AT1G09900"/>
<dbReference type="Araport" id="AT1G09900"/>
<dbReference type="TAIR" id="AT1G09900"/>
<dbReference type="eggNOG" id="KOG4197">
    <property type="taxonomic scope" value="Eukaryota"/>
</dbReference>
<dbReference type="HOGENOM" id="CLU_002706_49_0_1"/>
<dbReference type="InParanoid" id="Q3EDF8"/>
<dbReference type="OMA" id="VIFACNM"/>
<dbReference type="OrthoDB" id="185373at2759"/>
<dbReference type="PhylomeDB" id="Q3EDF8"/>
<dbReference type="PRO" id="PR:Q3EDF8"/>
<dbReference type="Proteomes" id="UP000006548">
    <property type="component" value="Chromosome 1"/>
</dbReference>
<dbReference type="ExpressionAtlas" id="Q3EDF8">
    <property type="expression patterns" value="baseline and differential"/>
</dbReference>
<dbReference type="FunFam" id="1.25.40.10:FF:000294">
    <property type="entry name" value="Pentatricopeptide repeat-containing protein At1g09900"/>
    <property type="match status" value="2"/>
</dbReference>
<dbReference type="FunFam" id="1.25.40.10:FF:001568">
    <property type="entry name" value="Pentatricopeptide repeat-containing protein At1g09900"/>
    <property type="match status" value="1"/>
</dbReference>
<dbReference type="FunFam" id="1.25.40.10:FF:002041">
    <property type="entry name" value="Pentatricopeptide repeat-containing protein At1g09900"/>
    <property type="match status" value="1"/>
</dbReference>
<dbReference type="Gene3D" id="1.25.40.10">
    <property type="entry name" value="Tetratricopeptide repeat domain"/>
    <property type="match status" value="6"/>
</dbReference>
<dbReference type="InterPro" id="IPR002885">
    <property type="entry name" value="Pentatricopeptide_rpt"/>
</dbReference>
<dbReference type="InterPro" id="IPR011990">
    <property type="entry name" value="TPR-like_helical_dom_sf"/>
</dbReference>
<dbReference type="NCBIfam" id="TIGR00756">
    <property type="entry name" value="PPR"/>
    <property type="match status" value="13"/>
</dbReference>
<dbReference type="PANTHER" id="PTHR47932">
    <property type="entry name" value="ATPASE EXPRESSION PROTEIN 3"/>
    <property type="match status" value="1"/>
</dbReference>
<dbReference type="PANTHER" id="PTHR47932:SF45">
    <property type="entry name" value="OS02G0565400 PROTEIN"/>
    <property type="match status" value="1"/>
</dbReference>
<dbReference type="Pfam" id="PF12854">
    <property type="entry name" value="PPR_1"/>
    <property type="match status" value="2"/>
</dbReference>
<dbReference type="Pfam" id="PF13041">
    <property type="entry name" value="PPR_2"/>
    <property type="match status" value="5"/>
</dbReference>
<dbReference type="SUPFAM" id="SSF81901">
    <property type="entry name" value="HCP-like"/>
    <property type="match status" value="1"/>
</dbReference>
<dbReference type="PROSITE" id="PS51375">
    <property type="entry name" value="PPR"/>
    <property type="match status" value="14"/>
</dbReference>
<evidence type="ECO:0000305" key="1"/>
<keyword id="KW-1185">Reference proteome</keyword>
<keyword id="KW-0677">Repeat</keyword>